<name>SIGK_MYCTO</name>
<proteinExistence type="inferred from homology"/>
<reference key="1">
    <citation type="journal article" date="2002" name="J. Bacteriol.">
        <title>Whole-genome comparison of Mycobacterium tuberculosis clinical and laboratory strains.</title>
        <authorList>
            <person name="Fleischmann R.D."/>
            <person name="Alland D."/>
            <person name="Eisen J.A."/>
            <person name="Carpenter L."/>
            <person name="White O."/>
            <person name="Peterson J.D."/>
            <person name="DeBoy R.T."/>
            <person name="Dodson R.J."/>
            <person name="Gwinn M.L."/>
            <person name="Haft D.H."/>
            <person name="Hickey E.K."/>
            <person name="Kolonay J.F."/>
            <person name="Nelson W.C."/>
            <person name="Umayam L.A."/>
            <person name="Ermolaeva M.D."/>
            <person name="Salzberg S.L."/>
            <person name="Delcher A."/>
            <person name="Utterback T.R."/>
            <person name="Weidman J.F."/>
            <person name="Khouri H.M."/>
            <person name="Gill J."/>
            <person name="Mikula A."/>
            <person name="Bishai W."/>
            <person name="Jacobs W.R. Jr."/>
            <person name="Venter J.C."/>
            <person name="Fraser C.M."/>
        </authorList>
    </citation>
    <scope>NUCLEOTIDE SEQUENCE [LARGE SCALE GENOMIC DNA]</scope>
    <source>
        <strain>CDC 1551 / Oshkosh</strain>
    </source>
</reference>
<keyword id="KW-0238">DNA-binding</keyword>
<keyword id="KW-1185">Reference proteome</keyword>
<keyword id="KW-0731">Sigma factor</keyword>
<keyword id="KW-0804">Transcription</keyword>
<keyword id="KW-0805">Transcription regulation</keyword>
<sequence length="187" mass="21035">MTGPPRLSSDLDALLRRVAGHDQAAFAEFYDHTKSRVYGLVMRVLRDTGYSEETTQEIYLEVWRNASEFDSAKGSALAWLLTMAHRRAVDRVRCEQAGNQREVRYGAANVDPASDVVADLAIAGDERRRVTECLKALTDTQRQCIELAYYGGLTYVEVSRRLAANLSTIKSRMRDALRSLRNCLDVS</sequence>
<organism>
    <name type="scientific">Mycobacterium tuberculosis (strain CDC 1551 / Oshkosh)</name>
    <dbReference type="NCBI Taxonomy" id="83331"/>
    <lineage>
        <taxon>Bacteria</taxon>
        <taxon>Bacillati</taxon>
        <taxon>Actinomycetota</taxon>
        <taxon>Actinomycetes</taxon>
        <taxon>Mycobacteriales</taxon>
        <taxon>Mycobacteriaceae</taxon>
        <taxon>Mycobacterium</taxon>
        <taxon>Mycobacterium tuberculosis complex</taxon>
    </lineage>
</organism>
<feature type="chain" id="PRO_0000428360" description="ECF RNA polymerase sigma factor SigK">
    <location>
        <begin position="1"/>
        <end position="187"/>
    </location>
</feature>
<feature type="DNA-binding region" description="H-T-H motif" evidence="1">
    <location>
        <begin position="155"/>
        <end position="174"/>
    </location>
</feature>
<feature type="region of interest" description="Sigma-70 factor domain-2">
    <location>
        <begin position="30"/>
        <end position="96"/>
    </location>
</feature>
<feature type="region of interest" description="Sigma-70 factor domain-4">
    <location>
        <begin position="133"/>
        <end position="182"/>
    </location>
</feature>
<feature type="short sequence motif" description="Interaction with polymerase core subunit RpoC">
    <location>
        <begin position="53"/>
        <end position="56"/>
    </location>
</feature>
<dbReference type="EMBL" id="AE000516">
    <property type="protein sequence ID" value="AAK44684.1"/>
    <property type="molecule type" value="Genomic_DNA"/>
</dbReference>
<dbReference type="PIR" id="F70830">
    <property type="entry name" value="F70830"/>
</dbReference>
<dbReference type="RefSeq" id="WP_003402246.1">
    <property type="nucleotide sequence ID" value="NZ_KK341227.1"/>
</dbReference>
<dbReference type="SMR" id="P9WGH6"/>
<dbReference type="KEGG" id="mtc:MT0461"/>
<dbReference type="PATRIC" id="fig|83331.31.peg.488"/>
<dbReference type="HOGENOM" id="CLU_047691_9_3_11"/>
<dbReference type="Proteomes" id="UP000001020">
    <property type="component" value="Chromosome"/>
</dbReference>
<dbReference type="GO" id="GO:0003677">
    <property type="term" value="F:DNA binding"/>
    <property type="evidence" value="ECO:0007669"/>
    <property type="project" value="UniProtKB-KW"/>
</dbReference>
<dbReference type="GO" id="GO:0016987">
    <property type="term" value="F:sigma factor activity"/>
    <property type="evidence" value="ECO:0007669"/>
    <property type="project" value="UniProtKB-KW"/>
</dbReference>
<dbReference type="GO" id="GO:0006352">
    <property type="term" value="P:DNA-templated transcription initiation"/>
    <property type="evidence" value="ECO:0007669"/>
    <property type="project" value="InterPro"/>
</dbReference>
<dbReference type="CDD" id="cd06171">
    <property type="entry name" value="Sigma70_r4"/>
    <property type="match status" value="1"/>
</dbReference>
<dbReference type="FunFam" id="1.10.1740.10:FF:000021">
    <property type="entry name" value="ECF RNA polymerase sigma factor SigK"/>
    <property type="match status" value="1"/>
</dbReference>
<dbReference type="Gene3D" id="1.10.1740.10">
    <property type="match status" value="1"/>
</dbReference>
<dbReference type="Gene3D" id="1.10.10.10">
    <property type="entry name" value="Winged helix-like DNA-binding domain superfamily/Winged helix DNA-binding domain"/>
    <property type="match status" value="1"/>
</dbReference>
<dbReference type="InterPro" id="IPR039425">
    <property type="entry name" value="RNA_pol_sigma-70-like"/>
</dbReference>
<dbReference type="InterPro" id="IPR014284">
    <property type="entry name" value="RNA_pol_sigma-70_dom"/>
</dbReference>
<dbReference type="InterPro" id="IPR007627">
    <property type="entry name" value="RNA_pol_sigma70_r2"/>
</dbReference>
<dbReference type="InterPro" id="IPR007630">
    <property type="entry name" value="RNA_pol_sigma70_r4"/>
</dbReference>
<dbReference type="InterPro" id="IPR013325">
    <property type="entry name" value="RNA_pol_sigma_r2"/>
</dbReference>
<dbReference type="InterPro" id="IPR013324">
    <property type="entry name" value="RNA_pol_sigma_r3/r4-like"/>
</dbReference>
<dbReference type="InterPro" id="IPR036388">
    <property type="entry name" value="WH-like_DNA-bd_sf"/>
</dbReference>
<dbReference type="NCBIfam" id="NF007228">
    <property type="entry name" value="PRK09646.1"/>
    <property type="match status" value="1"/>
</dbReference>
<dbReference type="NCBIfam" id="TIGR02937">
    <property type="entry name" value="sigma70-ECF"/>
    <property type="match status" value="1"/>
</dbReference>
<dbReference type="PANTHER" id="PTHR43133:SF66">
    <property type="entry name" value="ECF RNA POLYMERASE SIGMA FACTOR SIGK"/>
    <property type="match status" value="1"/>
</dbReference>
<dbReference type="PANTHER" id="PTHR43133">
    <property type="entry name" value="RNA POLYMERASE ECF-TYPE SIGMA FACTO"/>
    <property type="match status" value="1"/>
</dbReference>
<dbReference type="Pfam" id="PF04542">
    <property type="entry name" value="Sigma70_r2"/>
    <property type="match status" value="1"/>
</dbReference>
<dbReference type="Pfam" id="PF04545">
    <property type="entry name" value="Sigma70_r4"/>
    <property type="match status" value="1"/>
</dbReference>
<dbReference type="SUPFAM" id="SSF88946">
    <property type="entry name" value="Sigma2 domain of RNA polymerase sigma factors"/>
    <property type="match status" value="1"/>
</dbReference>
<dbReference type="SUPFAM" id="SSF88659">
    <property type="entry name" value="Sigma3 and sigma4 domains of RNA polymerase sigma factors"/>
    <property type="match status" value="1"/>
</dbReference>
<comment type="function">
    <text evidence="1">Sigma factors are initiation factors that promote the attachment of RNA polymerase to specific initiation sites and are then released. Extracytoplasmic function (ECF) sigma factors are held in an inactive form by an anti-sigma factor until released by regulated intramembrane proteolysis (By similarity).</text>
</comment>
<comment type="subunit">
    <text evidence="1">Interacts transiently with the RNA polymerase catalytic core formed by RpoA, RpoB, RpoC and RpoZ (2 alpha, 1 beta, 1 beta' and 1 omega subunit) to form the RNA polymerase holoenzyme that can initiate transcription.</text>
</comment>
<comment type="domain">
    <text evidence="1">The sigma-70 factor domain-2 mediates sequence-specific interaction with the -10 element in promoter DNA, and plays an important role in melting the double-stranded DNA and the formation of the transcription bubble. The sigma-70 factor domain-2 mediates interaction with the RNA polymerase subunits RpoB and RpoC (By similarity).</text>
</comment>
<comment type="domain">
    <text evidence="1">The sigma-70 factor domain-4 contains a helix-turn-helix (H-T-H) motif that mediates interaction with the -35 element in promoter DNA. The domain also mediates interaction with the RNA polymerase subunit RpoA. Interactions between sigma-70 factor domain-4 and anti-sigma factors prevents interaction of sigma factors with the RNA polymerase catalytic core (By similarity).</text>
</comment>
<comment type="miscellaneous">
    <text evidence="1">Extracytoplasmic function (ECF) sigma factors are held in an inactive form by an anti-sigma factor until released by regulated intramembrane proteolysis (RIP). RIP occurs when an extracytoplasmic signal triggers a concerted proteolytic cascade to transmit information and elicit cellular responses. The membrane-spanning anti-sigma factor is first cut extracytoplasmically (site-1 protease, S1P), then within the membrane itself (site-2 protease, S2P, Rip1), while cytoplasmic proteases finish degrading the regulatory protein, liberating SigK (By similarity).</text>
</comment>
<comment type="similarity">
    <text evidence="2">Belongs to the sigma-70 factor family. ECF subfamily.</text>
</comment>
<evidence type="ECO:0000250" key="1"/>
<evidence type="ECO:0000305" key="2"/>
<accession>P9WGH6</accession>
<accession>L0T3R3</accession>
<accession>O53730</accession>
<accession>Q7D9T3</accession>
<protein>
    <recommendedName>
        <fullName>ECF RNA polymerase sigma factor SigK</fullName>
        <shortName>ECF sigma factor SigK</shortName>
    </recommendedName>
    <alternativeName>
        <fullName>Alternative RNA polymerase sigma factor SigK</fullName>
    </alternativeName>
    <alternativeName>
        <fullName>RNA polymerase sigma-K factor</fullName>
        <shortName>Sigma-K factor</shortName>
    </alternativeName>
</protein>
<gene>
    <name type="primary">sigK</name>
    <name type="ordered locus">MT0461</name>
</gene>